<protein>
    <recommendedName>
        <fullName evidence="1">Anhydro-N-acetylmuramic acid kinase</fullName>
        <ecNumber evidence="1">2.7.1.170</ecNumber>
    </recommendedName>
    <alternativeName>
        <fullName evidence="1">AnhMurNAc kinase</fullName>
    </alternativeName>
</protein>
<comment type="function">
    <text evidence="1">Catalyzes the specific phosphorylation of 1,6-anhydro-N-acetylmuramic acid (anhMurNAc) with the simultaneous cleavage of the 1,6-anhydro ring, generating MurNAc-6-P. Is required for the utilization of anhMurNAc either imported from the medium or derived from its own cell wall murein, and thus plays a role in cell wall recycling.</text>
</comment>
<comment type="catalytic activity">
    <reaction evidence="1">
        <text>1,6-anhydro-N-acetyl-beta-muramate + ATP + H2O = N-acetyl-D-muramate 6-phosphate + ADP + H(+)</text>
        <dbReference type="Rhea" id="RHEA:24952"/>
        <dbReference type="ChEBI" id="CHEBI:15377"/>
        <dbReference type="ChEBI" id="CHEBI:15378"/>
        <dbReference type="ChEBI" id="CHEBI:30616"/>
        <dbReference type="ChEBI" id="CHEBI:58690"/>
        <dbReference type="ChEBI" id="CHEBI:58722"/>
        <dbReference type="ChEBI" id="CHEBI:456216"/>
        <dbReference type="EC" id="2.7.1.170"/>
    </reaction>
</comment>
<comment type="pathway">
    <text evidence="1">Amino-sugar metabolism; 1,6-anhydro-N-acetylmuramate degradation.</text>
</comment>
<comment type="pathway">
    <text evidence="1">Cell wall biogenesis; peptidoglycan recycling.</text>
</comment>
<comment type="similarity">
    <text evidence="1">Belongs to the anhydro-N-acetylmuramic acid kinase family.</text>
</comment>
<dbReference type="EC" id="2.7.1.170" evidence="1"/>
<dbReference type="EMBL" id="AE016828">
    <property type="protein sequence ID" value="AAO89739.1"/>
    <property type="molecule type" value="Genomic_DNA"/>
</dbReference>
<dbReference type="RefSeq" id="NP_819225.1">
    <property type="nucleotide sequence ID" value="NC_002971.3"/>
</dbReference>
<dbReference type="RefSeq" id="WP_005770633.1">
    <property type="nucleotide sequence ID" value="NZ_CDBG01000001.1"/>
</dbReference>
<dbReference type="SMR" id="Q83EX9"/>
<dbReference type="STRING" id="227377.CBU_0179"/>
<dbReference type="DNASU" id="1208051"/>
<dbReference type="EnsemblBacteria" id="AAO89739">
    <property type="protein sequence ID" value="AAO89739"/>
    <property type="gene ID" value="CBU_0179"/>
</dbReference>
<dbReference type="GeneID" id="1208051"/>
<dbReference type="KEGG" id="cbu:CBU_0179"/>
<dbReference type="PATRIC" id="fig|227377.7.peg.180"/>
<dbReference type="eggNOG" id="COG2377">
    <property type="taxonomic scope" value="Bacteria"/>
</dbReference>
<dbReference type="HOGENOM" id="CLU_038782_0_0_6"/>
<dbReference type="OrthoDB" id="9763949at2"/>
<dbReference type="UniPathway" id="UPA00343"/>
<dbReference type="UniPathway" id="UPA00544"/>
<dbReference type="Proteomes" id="UP000002671">
    <property type="component" value="Chromosome"/>
</dbReference>
<dbReference type="GO" id="GO:0005524">
    <property type="term" value="F:ATP binding"/>
    <property type="evidence" value="ECO:0007669"/>
    <property type="project" value="UniProtKB-UniRule"/>
</dbReference>
<dbReference type="GO" id="GO:0016301">
    <property type="term" value="F:kinase activity"/>
    <property type="evidence" value="ECO:0000318"/>
    <property type="project" value="GO_Central"/>
</dbReference>
<dbReference type="GO" id="GO:0016773">
    <property type="term" value="F:phosphotransferase activity, alcohol group as acceptor"/>
    <property type="evidence" value="ECO:0007669"/>
    <property type="project" value="UniProtKB-UniRule"/>
</dbReference>
<dbReference type="GO" id="GO:0097175">
    <property type="term" value="P:1,6-anhydro-N-acetyl-beta-muramic acid catabolic process"/>
    <property type="evidence" value="ECO:0007669"/>
    <property type="project" value="UniProtKB-UniRule"/>
</dbReference>
<dbReference type="GO" id="GO:0006040">
    <property type="term" value="P:amino sugar metabolic process"/>
    <property type="evidence" value="ECO:0007669"/>
    <property type="project" value="InterPro"/>
</dbReference>
<dbReference type="GO" id="GO:0009254">
    <property type="term" value="P:peptidoglycan turnover"/>
    <property type="evidence" value="ECO:0007669"/>
    <property type="project" value="UniProtKB-UniRule"/>
</dbReference>
<dbReference type="CDD" id="cd24050">
    <property type="entry name" value="ASKHA_NBD_ANMK"/>
    <property type="match status" value="1"/>
</dbReference>
<dbReference type="Gene3D" id="3.30.420.40">
    <property type="match status" value="2"/>
</dbReference>
<dbReference type="HAMAP" id="MF_01270">
    <property type="entry name" value="AnhMurNAc_kinase"/>
    <property type="match status" value="1"/>
</dbReference>
<dbReference type="InterPro" id="IPR005338">
    <property type="entry name" value="Anhydro_N_Ac-Mur_kinase"/>
</dbReference>
<dbReference type="InterPro" id="IPR043129">
    <property type="entry name" value="ATPase_NBD"/>
</dbReference>
<dbReference type="NCBIfam" id="NF007139">
    <property type="entry name" value="PRK09585.1-3"/>
    <property type="match status" value="1"/>
</dbReference>
<dbReference type="NCBIfam" id="NF007148">
    <property type="entry name" value="PRK09585.3-2"/>
    <property type="match status" value="1"/>
</dbReference>
<dbReference type="PANTHER" id="PTHR30605">
    <property type="entry name" value="ANHYDRO-N-ACETYLMURAMIC ACID KINASE"/>
    <property type="match status" value="1"/>
</dbReference>
<dbReference type="PANTHER" id="PTHR30605:SF0">
    <property type="entry name" value="ANHYDRO-N-ACETYLMURAMIC ACID KINASE"/>
    <property type="match status" value="1"/>
</dbReference>
<dbReference type="Pfam" id="PF03702">
    <property type="entry name" value="AnmK"/>
    <property type="match status" value="1"/>
</dbReference>
<dbReference type="SUPFAM" id="SSF53067">
    <property type="entry name" value="Actin-like ATPase domain"/>
    <property type="match status" value="1"/>
</dbReference>
<organism>
    <name type="scientific">Coxiella burnetii (strain RSA 493 / Nine Mile phase I)</name>
    <dbReference type="NCBI Taxonomy" id="227377"/>
    <lineage>
        <taxon>Bacteria</taxon>
        <taxon>Pseudomonadati</taxon>
        <taxon>Pseudomonadota</taxon>
        <taxon>Gammaproteobacteria</taxon>
        <taxon>Legionellales</taxon>
        <taxon>Coxiellaceae</taxon>
        <taxon>Coxiella</taxon>
    </lineage>
</organism>
<reference key="1">
    <citation type="journal article" date="2003" name="Proc. Natl. Acad. Sci. U.S.A.">
        <title>Complete genome sequence of the Q-fever pathogen, Coxiella burnetii.</title>
        <authorList>
            <person name="Seshadri R."/>
            <person name="Paulsen I.T."/>
            <person name="Eisen J.A."/>
            <person name="Read T.D."/>
            <person name="Nelson K.E."/>
            <person name="Nelson W.C."/>
            <person name="Ward N.L."/>
            <person name="Tettelin H."/>
            <person name="Davidsen T.M."/>
            <person name="Beanan M.J."/>
            <person name="DeBoy R.T."/>
            <person name="Daugherty S.C."/>
            <person name="Brinkac L.M."/>
            <person name="Madupu R."/>
            <person name="Dodson R.J."/>
            <person name="Khouri H.M."/>
            <person name="Lee K.H."/>
            <person name="Carty H.A."/>
            <person name="Scanlan D."/>
            <person name="Heinzen R.A."/>
            <person name="Thompson H.A."/>
            <person name="Samuel J.E."/>
            <person name="Fraser C.M."/>
            <person name="Heidelberg J.F."/>
        </authorList>
    </citation>
    <scope>NUCLEOTIDE SEQUENCE [LARGE SCALE GENOMIC DNA]</scope>
    <source>
        <strain>RSA 493 / Nine Mile phase I</strain>
    </source>
</reference>
<gene>
    <name evidence="1" type="primary">anmK</name>
    <name type="ordered locus">CBU_0179</name>
</gene>
<feature type="chain" id="PRO_0000249995" description="Anhydro-N-acetylmuramic acid kinase">
    <location>
        <begin position="1"/>
        <end position="372"/>
    </location>
</feature>
<feature type="binding site" evidence="1">
    <location>
        <begin position="12"/>
        <end position="19"/>
    </location>
    <ligand>
        <name>ATP</name>
        <dbReference type="ChEBI" id="CHEBI:30616"/>
    </ligand>
</feature>
<name>ANMK_COXBU</name>
<proteinExistence type="inferred from homology"/>
<sequence>MPKERYIGLISGTSMDALDTALVQFDPLKIIATHGEPIPTELKKNLVALSTGTDNSIPSMGETDVALGRLFGEAVLTLLEKAKVSSDSIQAIGSHGQTIRHMPNGKHPFTLQIGDPNTIAALTGITTVADFRRRDMALGGQGAPLAPAFHEFLLRDQSENRLILNIGGIANLTFLPRDPEKSTIGFDTGPGNTLLDAWCLMNLNKDYDDQGQWAASGRVQEKLVAQLLAEPYFQTPPPKSTGREYFNLNWLKKNLNGEKFDPVDIQATLVELTARSVANCCRNFSMDSGSLWLCGGGARNHHLVNRLKVLCKPLRVTTTEEIGIHPDWLEAVCFAWLAKQTLEKKPGNLPSVTGAKKSAILGAIYWGEKFNY</sequence>
<keyword id="KW-0067">ATP-binding</keyword>
<keyword id="KW-0119">Carbohydrate metabolism</keyword>
<keyword id="KW-0418">Kinase</keyword>
<keyword id="KW-0547">Nucleotide-binding</keyword>
<keyword id="KW-1185">Reference proteome</keyword>
<keyword id="KW-0808">Transferase</keyword>
<accession>Q83EX9</accession>
<evidence type="ECO:0000255" key="1">
    <source>
        <dbReference type="HAMAP-Rule" id="MF_01270"/>
    </source>
</evidence>